<proteinExistence type="inferred from homology"/>
<reference key="1">
    <citation type="journal article" date="2002" name="Nucleic Acids Res.">
        <title>Genome sequence of Oceanobacillus iheyensis isolated from the Iheya Ridge and its unexpected adaptive capabilities to extreme environments.</title>
        <authorList>
            <person name="Takami H."/>
            <person name="Takaki Y."/>
            <person name="Uchiyama I."/>
        </authorList>
    </citation>
    <scope>NUCLEOTIDE SEQUENCE [LARGE SCALE GENOMIC DNA]</scope>
    <source>
        <strain>DSM 14371 / CIP 107618 / JCM 11309 / KCTC 3954 / HTE831</strain>
    </source>
</reference>
<dbReference type="EMBL" id="BA000028">
    <property type="protein sequence ID" value="BAC12066.1"/>
    <property type="molecule type" value="Genomic_DNA"/>
</dbReference>
<dbReference type="RefSeq" id="WP_011064513.1">
    <property type="nucleotide sequence ID" value="NC_004193.1"/>
</dbReference>
<dbReference type="SMR" id="Q8ETZ0"/>
<dbReference type="STRING" id="221109.gene:10732300"/>
<dbReference type="KEGG" id="oih:OB0110"/>
<dbReference type="eggNOG" id="COG0222">
    <property type="taxonomic scope" value="Bacteria"/>
</dbReference>
<dbReference type="HOGENOM" id="CLU_086499_3_2_9"/>
<dbReference type="OrthoDB" id="9811748at2"/>
<dbReference type="PhylomeDB" id="Q8ETZ0"/>
<dbReference type="Proteomes" id="UP000000822">
    <property type="component" value="Chromosome"/>
</dbReference>
<dbReference type="GO" id="GO:0022625">
    <property type="term" value="C:cytosolic large ribosomal subunit"/>
    <property type="evidence" value="ECO:0007669"/>
    <property type="project" value="TreeGrafter"/>
</dbReference>
<dbReference type="GO" id="GO:0003729">
    <property type="term" value="F:mRNA binding"/>
    <property type="evidence" value="ECO:0007669"/>
    <property type="project" value="TreeGrafter"/>
</dbReference>
<dbReference type="GO" id="GO:0003735">
    <property type="term" value="F:structural constituent of ribosome"/>
    <property type="evidence" value="ECO:0007669"/>
    <property type="project" value="InterPro"/>
</dbReference>
<dbReference type="GO" id="GO:0006412">
    <property type="term" value="P:translation"/>
    <property type="evidence" value="ECO:0007669"/>
    <property type="project" value="UniProtKB-UniRule"/>
</dbReference>
<dbReference type="CDD" id="cd00387">
    <property type="entry name" value="Ribosomal_L7_L12"/>
    <property type="match status" value="1"/>
</dbReference>
<dbReference type="FunFam" id="3.30.1390.10:FF:000001">
    <property type="entry name" value="50S ribosomal protein L7/L12"/>
    <property type="match status" value="1"/>
</dbReference>
<dbReference type="Gene3D" id="3.30.1390.10">
    <property type="match status" value="1"/>
</dbReference>
<dbReference type="Gene3D" id="1.20.5.710">
    <property type="entry name" value="Single helix bin"/>
    <property type="match status" value="1"/>
</dbReference>
<dbReference type="HAMAP" id="MF_00368">
    <property type="entry name" value="Ribosomal_bL12"/>
    <property type="match status" value="1"/>
</dbReference>
<dbReference type="InterPro" id="IPR000206">
    <property type="entry name" value="Ribosomal_bL12"/>
</dbReference>
<dbReference type="InterPro" id="IPR013823">
    <property type="entry name" value="Ribosomal_bL12_C"/>
</dbReference>
<dbReference type="InterPro" id="IPR014719">
    <property type="entry name" value="Ribosomal_bL12_C/ClpS-like"/>
</dbReference>
<dbReference type="InterPro" id="IPR008932">
    <property type="entry name" value="Ribosomal_bL12_oligo"/>
</dbReference>
<dbReference type="InterPro" id="IPR036235">
    <property type="entry name" value="Ribosomal_bL12_oligo_N_sf"/>
</dbReference>
<dbReference type="NCBIfam" id="TIGR00855">
    <property type="entry name" value="L12"/>
    <property type="match status" value="1"/>
</dbReference>
<dbReference type="PANTHER" id="PTHR45987">
    <property type="entry name" value="39S RIBOSOMAL PROTEIN L12"/>
    <property type="match status" value="1"/>
</dbReference>
<dbReference type="PANTHER" id="PTHR45987:SF4">
    <property type="entry name" value="LARGE RIBOSOMAL SUBUNIT PROTEIN BL12M"/>
    <property type="match status" value="1"/>
</dbReference>
<dbReference type="Pfam" id="PF00542">
    <property type="entry name" value="Ribosomal_L12"/>
    <property type="match status" value="1"/>
</dbReference>
<dbReference type="Pfam" id="PF16320">
    <property type="entry name" value="Ribosomal_L12_N"/>
    <property type="match status" value="1"/>
</dbReference>
<dbReference type="SUPFAM" id="SSF54736">
    <property type="entry name" value="ClpS-like"/>
    <property type="match status" value="1"/>
</dbReference>
<dbReference type="SUPFAM" id="SSF48300">
    <property type="entry name" value="Ribosomal protein L7/12, oligomerisation (N-terminal) domain"/>
    <property type="match status" value="1"/>
</dbReference>
<evidence type="ECO:0000255" key="1">
    <source>
        <dbReference type="HAMAP-Rule" id="MF_00368"/>
    </source>
</evidence>
<evidence type="ECO:0000256" key="2">
    <source>
        <dbReference type="SAM" id="MobiDB-lite"/>
    </source>
</evidence>
<evidence type="ECO:0000305" key="3"/>
<keyword id="KW-1185">Reference proteome</keyword>
<keyword id="KW-0687">Ribonucleoprotein</keyword>
<keyword id="KW-0689">Ribosomal protein</keyword>
<name>RL7_OCEIH</name>
<sequence length="120" mass="12468">MTNEEMISAIKEMSVLELNDLVKAIEEEFGVTAAAPVAAAGAAGGAVEEEKTEFDVVLTSAGASKIKVVKAVREITGLGLKDAKDLVDNAPKPIKEGVSKEEAEEVQGKLEEAGASVEVK</sequence>
<gene>
    <name evidence="1" type="primary">rplL</name>
    <name type="ordered locus">OB0110</name>
</gene>
<feature type="chain" id="PRO_0000243457" description="Large ribosomal subunit protein bL12">
    <location>
        <begin position="1"/>
        <end position="120"/>
    </location>
</feature>
<feature type="region of interest" description="Disordered" evidence="2">
    <location>
        <begin position="95"/>
        <end position="120"/>
    </location>
</feature>
<feature type="compositionally biased region" description="Basic and acidic residues" evidence="2">
    <location>
        <begin position="95"/>
        <end position="112"/>
    </location>
</feature>
<accession>Q8ETZ0</accession>
<protein>
    <recommendedName>
        <fullName evidence="1">Large ribosomal subunit protein bL12</fullName>
    </recommendedName>
    <alternativeName>
        <fullName evidence="3">50S ribosomal protein L7/L12</fullName>
    </alternativeName>
</protein>
<organism>
    <name type="scientific">Oceanobacillus iheyensis (strain DSM 14371 / CIP 107618 / JCM 11309 / KCTC 3954 / HTE831)</name>
    <dbReference type="NCBI Taxonomy" id="221109"/>
    <lineage>
        <taxon>Bacteria</taxon>
        <taxon>Bacillati</taxon>
        <taxon>Bacillota</taxon>
        <taxon>Bacilli</taxon>
        <taxon>Bacillales</taxon>
        <taxon>Bacillaceae</taxon>
        <taxon>Oceanobacillus</taxon>
    </lineage>
</organism>
<comment type="function">
    <text evidence="1">Forms part of the ribosomal stalk which helps the ribosome interact with GTP-bound translation factors. Is thus essential for accurate translation.</text>
</comment>
<comment type="subunit">
    <text evidence="1">Homodimer. Part of the ribosomal stalk of the 50S ribosomal subunit. Forms a multimeric L10(L12)X complex, where L10 forms an elongated spine to which 2 to 4 L12 dimers bind in a sequential fashion. Binds GTP-bound translation factors.</text>
</comment>
<comment type="similarity">
    <text evidence="1">Belongs to the bacterial ribosomal protein bL12 family.</text>
</comment>